<comment type="function">
    <text evidence="1">Specifically methylates the N7 position of guanine in position 527 of 16S rRNA.</text>
</comment>
<comment type="catalytic activity">
    <reaction evidence="1">
        <text>guanosine(527) in 16S rRNA + S-adenosyl-L-methionine = N(7)-methylguanosine(527) in 16S rRNA + S-adenosyl-L-homocysteine</text>
        <dbReference type="Rhea" id="RHEA:42732"/>
        <dbReference type="Rhea" id="RHEA-COMP:10209"/>
        <dbReference type="Rhea" id="RHEA-COMP:10210"/>
        <dbReference type="ChEBI" id="CHEBI:57856"/>
        <dbReference type="ChEBI" id="CHEBI:59789"/>
        <dbReference type="ChEBI" id="CHEBI:74269"/>
        <dbReference type="ChEBI" id="CHEBI:74480"/>
        <dbReference type="EC" id="2.1.1.170"/>
    </reaction>
</comment>
<comment type="subcellular location">
    <subcellularLocation>
        <location evidence="1">Cytoplasm</location>
    </subcellularLocation>
</comment>
<comment type="similarity">
    <text evidence="1">Belongs to the methyltransferase superfamily. RNA methyltransferase RsmG family.</text>
</comment>
<organism>
    <name type="scientific">Legionella pneumophila subsp. pneumophila (strain Philadelphia 1 / ATCC 33152 / DSM 7513)</name>
    <dbReference type="NCBI Taxonomy" id="272624"/>
    <lineage>
        <taxon>Bacteria</taxon>
        <taxon>Pseudomonadati</taxon>
        <taxon>Pseudomonadota</taxon>
        <taxon>Gammaproteobacteria</taxon>
        <taxon>Legionellales</taxon>
        <taxon>Legionellaceae</taxon>
        <taxon>Legionella</taxon>
    </lineage>
</organism>
<proteinExistence type="inferred from homology"/>
<name>RSMG_LEGPH</name>
<protein>
    <recommendedName>
        <fullName evidence="1">Ribosomal RNA small subunit methyltransferase G</fullName>
        <ecNumber evidence="1">2.1.1.170</ecNumber>
    </recommendedName>
    <alternativeName>
        <fullName evidence="1">16S rRNA 7-methylguanosine methyltransferase</fullName>
        <shortName evidence="1">16S rRNA m7G methyltransferase</shortName>
    </alternativeName>
</protein>
<accession>Q5ZRJ1</accession>
<sequence>MIDNTKIRSLLEKGLAEFKLDSIGDLLLDFLLLLNKWNKTYNLTAIRDIETMVSKHLFDSLAILPWIKGNHIIDVGTGPGLPGIPLAIAKPDLQFVLLDSNGKKIRFLNEVKRQLNIKNIEPIQIRVENYHPNQGFDTVISRAFSSLEQMIKWTQHLVAQDGLWLAMKGRFPDTELVPIHQTYRVERYAVPGIEGERCCVLINNTNKE</sequence>
<keyword id="KW-0963">Cytoplasm</keyword>
<keyword id="KW-0489">Methyltransferase</keyword>
<keyword id="KW-1185">Reference proteome</keyword>
<keyword id="KW-0698">rRNA processing</keyword>
<keyword id="KW-0949">S-adenosyl-L-methionine</keyword>
<keyword id="KW-0808">Transferase</keyword>
<dbReference type="EC" id="2.1.1.170" evidence="1"/>
<dbReference type="EMBL" id="AE017354">
    <property type="protein sequence ID" value="AAU28937.1"/>
    <property type="molecule type" value="Genomic_DNA"/>
</dbReference>
<dbReference type="RefSeq" id="WP_010948576.1">
    <property type="nucleotide sequence ID" value="NC_002942.5"/>
</dbReference>
<dbReference type="RefSeq" id="YP_096884.1">
    <property type="nucleotide sequence ID" value="NC_002942.5"/>
</dbReference>
<dbReference type="SMR" id="Q5ZRJ1"/>
<dbReference type="STRING" id="272624.lpg2890"/>
<dbReference type="PaxDb" id="272624-lpg2890"/>
<dbReference type="GeneID" id="57036889"/>
<dbReference type="KEGG" id="lpn:lpg2890"/>
<dbReference type="PATRIC" id="fig|272624.6.peg.3078"/>
<dbReference type="eggNOG" id="COG0357">
    <property type="taxonomic scope" value="Bacteria"/>
</dbReference>
<dbReference type="HOGENOM" id="CLU_065341_2_0_6"/>
<dbReference type="OrthoDB" id="9808773at2"/>
<dbReference type="Proteomes" id="UP000000609">
    <property type="component" value="Chromosome"/>
</dbReference>
<dbReference type="GO" id="GO:0005829">
    <property type="term" value="C:cytosol"/>
    <property type="evidence" value="ECO:0007669"/>
    <property type="project" value="TreeGrafter"/>
</dbReference>
<dbReference type="GO" id="GO:0070043">
    <property type="term" value="F:rRNA (guanine-N7-)-methyltransferase activity"/>
    <property type="evidence" value="ECO:0007669"/>
    <property type="project" value="UniProtKB-UniRule"/>
</dbReference>
<dbReference type="CDD" id="cd02440">
    <property type="entry name" value="AdoMet_MTases"/>
    <property type="match status" value="1"/>
</dbReference>
<dbReference type="Gene3D" id="3.40.50.150">
    <property type="entry name" value="Vaccinia Virus protein VP39"/>
    <property type="match status" value="1"/>
</dbReference>
<dbReference type="HAMAP" id="MF_00074">
    <property type="entry name" value="16SrRNA_methyltr_G"/>
    <property type="match status" value="1"/>
</dbReference>
<dbReference type="InterPro" id="IPR003682">
    <property type="entry name" value="rRNA_ssu_MeTfrase_G"/>
</dbReference>
<dbReference type="InterPro" id="IPR029063">
    <property type="entry name" value="SAM-dependent_MTases_sf"/>
</dbReference>
<dbReference type="NCBIfam" id="TIGR00138">
    <property type="entry name" value="rsmG_gidB"/>
    <property type="match status" value="1"/>
</dbReference>
<dbReference type="PANTHER" id="PTHR31760">
    <property type="entry name" value="S-ADENOSYL-L-METHIONINE-DEPENDENT METHYLTRANSFERASES SUPERFAMILY PROTEIN"/>
    <property type="match status" value="1"/>
</dbReference>
<dbReference type="PANTHER" id="PTHR31760:SF0">
    <property type="entry name" value="S-ADENOSYL-L-METHIONINE-DEPENDENT METHYLTRANSFERASES SUPERFAMILY PROTEIN"/>
    <property type="match status" value="1"/>
</dbReference>
<dbReference type="Pfam" id="PF02527">
    <property type="entry name" value="GidB"/>
    <property type="match status" value="1"/>
</dbReference>
<dbReference type="PIRSF" id="PIRSF003078">
    <property type="entry name" value="GidB"/>
    <property type="match status" value="1"/>
</dbReference>
<dbReference type="SUPFAM" id="SSF53335">
    <property type="entry name" value="S-adenosyl-L-methionine-dependent methyltransferases"/>
    <property type="match status" value="1"/>
</dbReference>
<evidence type="ECO:0000255" key="1">
    <source>
        <dbReference type="HAMAP-Rule" id="MF_00074"/>
    </source>
</evidence>
<reference key="1">
    <citation type="journal article" date="2004" name="Science">
        <title>The genomic sequence of the accidental pathogen Legionella pneumophila.</title>
        <authorList>
            <person name="Chien M."/>
            <person name="Morozova I."/>
            <person name="Shi S."/>
            <person name="Sheng H."/>
            <person name="Chen J."/>
            <person name="Gomez S.M."/>
            <person name="Asamani G."/>
            <person name="Hill K."/>
            <person name="Nuara J."/>
            <person name="Feder M."/>
            <person name="Rineer J."/>
            <person name="Greenberg J.J."/>
            <person name="Steshenko V."/>
            <person name="Park S.H."/>
            <person name="Zhao B."/>
            <person name="Teplitskaya E."/>
            <person name="Edwards J.R."/>
            <person name="Pampou S."/>
            <person name="Georghiou A."/>
            <person name="Chou I.-C."/>
            <person name="Iannuccilli W."/>
            <person name="Ulz M.E."/>
            <person name="Kim D.H."/>
            <person name="Geringer-Sameth A."/>
            <person name="Goldsberry C."/>
            <person name="Morozov P."/>
            <person name="Fischer S.G."/>
            <person name="Segal G."/>
            <person name="Qu X."/>
            <person name="Rzhetsky A."/>
            <person name="Zhang P."/>
            <person name="Cayanis E."/>
            <person name="De Jong P.J."/>
            <person name="Ju J."/>
            <person name="Kalachikov S."/>
            <person name="Shuman H.A."/>
            <person name="Russo J.J."/>
        </authorList>
    </citation>
    <scope>NUCLEOTIDE SEQUENCE [LARGE SCALE GENOMIC DNA]</scope>
    <source>
        <strain>Philadelphia 1 / ATCC 33152 / DSM 7513</strain>
    </source>
</reference>
<feature type="chain" id="PRO_0000184272" description="Ribosomal RNA small subunit methyltransferase G">
    <location>
        <begin position="1"/>
        <end position="208"/>
    </location>
</feature>
<feature type="binding site" evidence="1">
    <location>
        <position position="76"/>
    </location>
    <ligand>
        <name>S-adenosyl-L-methionine</name>
        <dbReference type="ChEBI" id="CHEBI:59789"/>
    </ligand>
</feature>
<feature type="binding site" evidence="1">
    <location>
        <position position="81"/>
    </location>
    <ligand>
        <name>S-adenosyl-L-methionine</name>
        <dbReference type="ChEBI" id="CHEBI:59789"/>
    </ligand>
</feature>
<feature type="binding site" evidence="1">
    <location>
        <begin position="127"/>
        <end position="128"/>
    </location>
    <ligand>
        <name>S-adenosyl-L-methionine</name>
        <dbReference type="ChEBI" id="CHEBI:59789"/>
    </ligand>
</feature>
<feature type="binding site" evidence="1">
    <location>
        <position position="142"/>
    </location>
    <ligand>
        <name>S-adenosyl-L-methionine</name>
        <dbReference type="ChEBI" id="CHEBI:59789"/>
    </ligand>
</feature>
<gene>
    <name evidence="1" type="primary">rsmG</name>
    <name type="ordered locus">lpg2890</name>
</gene>